<dbReference type="EC" id="2.7.11.-" evidence="1"/>
<dbReference type="EC" id="2.7.4.-" evidence="1"/>
<dbReference type="EMBL" id="AL954747">
    <property type="protein sequence ID" value="CAD83970.1"/>
    <property type="molecule type" value="Genomic_DNA"/>
</dbReference>
<dbReference type="RefSeq" id="WP_011110711.1">
    <property type="nucleotide sequence ID" value="NC_004757.1"/>
</dbReference>
<dbReference type="SMR" id="Q82Y30"/>
<dbReference type="STRING" id="228410.NE0059"/>
<dbReference type="GeneID" id="87103273"/>
<dbReference type="KEGG" id="neu:NE0059"/>
<dbReference type="eggNOG" id="COG1493">
    <property type="taxonomic scope" value="Bacteria"/>
</dbReference>
<dbReference type="HOGENOM" id="CLU_052030_0_2_4"/>
<dbReference type="OrthoDB" id="9778803at2"/>
<dbReference type="PhylomeDB" id="Q82Y30"/>
<dbReference type="Proteomes" id="UP000001416">
    <property type="component" value="Chromosome"/>
</dbReference>
<dbReference type="GO" id="GO:0005524">
    <property type="term" value="F:ATP binding"/>
    <property type="evidence" value="ECO:0007669"/>
    <property type="project" value="UniProtKB-UniRule"/>
</dbReference>
<dbReference type="GO" id="GO:0000287">
    <property type="term" value="F:magnesium ion binding"/>
    <property type="evidence" value="ECO:0007669"/>
    <property type="project" value="UniProtKB-UniRule"/>
</dbReference>
<dbReference type="GO" id="GO:0000155">
    <property type="term" value="F:phosphorelay sensor kinase activity"/>
    <property type="evidence" value="ECO:0007669"/>
    <property type="project" value="InterPro"/>
</dbReference>
<dbReference type="GO" id="GO:0004674">
    <property type="term" value="F:protein serine/threonine kinase activity"/>
    <property type="evidence" value="ECO:0007669"/>
    <property type="project" value="UniProtKB-KW"/>
</dbReference>
<dbReference type="GO" id="GO:0004712">
    <property type="term" value="F:protein serine/threonine/tyrosine kinase activity"/>
    <property type="evidence" value="ECO:0007669"/>
    <property type="project" value="UniProtKB-UniRule"/>
</dbReference>
<dbReference type="GO" id="GO:0006109">
    <property type="term" value="P:regulation of carbohydrate metabolic process"/>
    <property type="evidence" value="ECO:0007669"/>
    <property type="project" value="UniProtKB-UniRule"/>
</dbReference>
<dbReference type="CDD" id="cd01918">
    <property type="entry name" value="HprK_C"/>
    <property type="match status" value="1"/>
</dbReference>
<dbReference type="FunFam" id="3.40.50.300:FF:000174">
    <property type="entry name" value="HPr kinase/phosphorylase"/>
    <property type="match status" value="1"/>
</dbReference>
<dbReference type="Gene3D" id="3.40.1390.20">
    <property type="entry name" value="HprK N-terminal domain-like"/>
    <property type="match status" value="1"/>
</dbReference>
<dbReference type="Gene3D" id="3.40.50.300">
    <property type="entry name" value="P-loop containing nucleotide triphosphate hydrolases"/>
    <property type="match status" value="1"/>
</dbReference>
<dbReference type="HAMAP" id="MF_01249">
    <property type="entry name" value="HPr_kinase"/>
    <property type="match status" value="1"/>
</dbReference>
<dbReference type="InterPro" id="IPR003755">
    <property type="entry name" value="HPr(Ser)_kin/Pase"/>
</dbReference>
<dbReference type="InterPro" id="IPR011104">
    <property type="entry name" value="Hpr_kin/Pase_C"/>
</dbReference>
<dbReference type="InterPro" id="IPR011126">
    <property type="entry name" value="Hpr_kin/Pase_Hpr_N"/>
</dbReference>
<dbReference type="InterPro" id="IPR027417">
    <property type="entry name" value="P-loop_NTPase"/>
</dbReference>
<dbReference type="InterPro" id="IPR028979">
    <property type="entry name" value="Ser_kin/Pase_Hpr-like_N_sf"/>
</dbReference>
<dbReference type="InterPro" id="IPR025662">
    <property type="entry name" value="Sigma_54_int_dom_ATP-bd_1"/>
</dbReference>
<dbReference type="NCBIfam" id="TIGR00679">
    <property type="entry name" value="hpr-ser"/>
    <property type="match status" value="1"/>
</dbReference>
<dbReference type="PANTHER" id="PTHR30305:SF1">
    <property type="entry name" value="HPR KINASE_PHOSPHORYLASE"/>
    <property type="match status" value="1"/>
</dbReference>
<dbReference type="PANTHER" id="PTHR30305">
    <property type="entry name" value="PROTEIN YJDM-RELATED"/>
    <property type="match status" value="1"/>
</dbReference>
<dbReference type="Pfam" id="PF07475">
    <property type="entry name" value="Hpr_kinase_C"/>
    <property type="match status" value="1"/>
</dbReference>
<dbReference type="Pfam" id="PF02603">
    <property type="entry name" value="Hpr_kinase_N"/>
    <property type="match status" value="1"/>
</dbReference>
<dbReference type="SUPFAM" id="SSF75138">
    <property type="entry name" value="HprK N-terminal domain-like"/>
    <property type="match status" value="1"/>
</dbReference>
<dbReference type="SUPFAM" id="SSF53795">
    <property type="entry name" value="PEP carboxykinase-like"/>
    <property type="match status" value="1"/>
</dbReference>
<evidence type="ECO:0000255" key="1">
    <source>
        <dbReference type="HAMAP-Rule" id="MF_01249"/>
    </source>
</evidence>
<feature type="chain" id="PRO_0000058977" description="HPr kinase/phosphorylase">
    <location>
        <begin position="1"/>
        <end position="323"/>
    </location>
</feature>
<feature type="region of interest" description="Important for the catalytic mechanism of both phosphorylation and dephosphorylation" evidence="1">
    <location>
        <begin position="205"/>
        <end position="214"/>
    </location>
</feature>
<feature type="region of interest" description="Important for the catalytic mechanism of dephosphorylation" evidence="1">
    <location>
        <begin position="270"/>
        <end position="275"/>
    </location>
</feature>
<feature type="active site" evidence="1">
    <location>
        <position position="142"/>
    </location>
</feature>
<feature type="active site" evidence="1">
    <location>
        <position position="163"/>
    </location>
</feature>
<feature type="active site" description="Proton acceptor; for phosphorylation activity. Proton donor; for dephosphorylation activity" evidence="1">
    <location>
        <position position="181"/>
    </location>
</feature>
<feature type="active site" evidence="1">
    <location>
        <position position="249"/>
    </location>
</feature>
<feature type="binding site" evidence="1">
    <location>
        <begin position="157"/>
        <end position="164"/>
    </location>
    <ligand>
        <name>ATP</name>
        <dbReference type="ChEBI" id="CHEBI:30616"/>
    </ligand>
</feature>
<feature type="binding site" evidence="1">
    <location>
        <position position="164"/>
    </location>
    <ligand>
        <name>Mg(2+)</name>
        <dbReference type="ChEBI" id="CHEBI:18420"/>
    </ligand>
</feature>
<feature type="binding site" evidence="1">
    <location>
        <position position="206"/>
    </location>
    <ligand>
        <name>Mg(2+)</name>
        <dbReference type="ChEBI" id="CHEBI:18420"/>
    </ligand>
</feature>
<keyword id="KW-0067">ATP-binding</keyword>
<keyword id="KW-0418">Kinase</keyword>
<keyword id="KW-0460">Magnesium</keyword>
<keyword id="KW-0479">Metal-binding</keyword>
<keyword id="KW-0511">Multifunctional enzyme</keyword>
<keyword id="KW-0547">Nucleotide-binding</keyword>
<keyword id="KW-1185">Reference proteome</keyword>
<keyword id="KW-0723">Serine/threonine-protein kinase</keyword>
<keyword id="KW-0808">Transferase</keyword>
<protein>
    <recommendedName>
        <fullName evidence="1">HPr kinase/phosphorylase</fullName>
        <shortName evidence="1">HPrK/P</shortName>
        <ecNumber evidence="1">2.7.11.-</ecNumber>
        <ecNumber evidence="1">2.7.4.-</ecNumber>
    </recommendedName>
    <alternativeName>
        <fullName evidence="1">HPr(Ser) kinase/phosphorylase</fullName>
    </alternativeName>
</protein>
<reference key="1">
    <citation type="journal article" date="2003" name="J. Bacteriol.">
        <title>Complete genome sequence of the ammonia-oxidizing bacterium and obligate chemolithoautotroph Nitrosomonas europaea.</title>
        <authorList>
            <person name="Chain P."/>
            <person name="Lamerdin J.E."/>
            <person name="Larimer F.W."/>
            <person name="Regala W."/>
            <person name="Lao V."/>
            <person name="Land M.L."/>
            <person name="Hauser L."/>
            <person name="Hooper A.B."/>
            <person name="Klotz M.G."/>
            <person name="Norton J."/>
            <person name="Sayavedra-Soto L.A."/>
            <person name="Arciero D.M."/>
            <person name="Hommes N.G."/>
            <person name="Whittaker M.M."/>
            <person name="Arp D.J."/>
        </authorList>
    </citation>
    <scope>NUCLEOTIDE SEQUENCE [LARGE SCALE GENOMIC DNA]</scope>
    <source>
        <strain>ATCC 19718 / CIP 103999 / KCTC 2705 / NBRC 14298</strain>
    </source>
</reference>
<gene>
    <name evidence="1" type="primary">hprK</name>
    <name type="ordered locus">NE0059</name>
</gene>
<comment type="function">
    <text evidence="1">Catalyzes the ATP- as well as the pyrophosphate-dependent phosphorylation of a specific serine residue in HPr, a phosphocarrier protein of the phosphoenolpyruvate-dependent sugar phosphotransferase system (PTS). HprK/P also catalyzes the pyrophosphate-producing, inorganic phosphate-dependent dephosphorylation (phosphorolysis) of seryl-phosphorylated HPr (P-Ser-HPr).</text>
</comment>
<comment type="catalytic activity">
    <reaction evidence="1">
        <text>[HPr protein]-L-serine + ATP = [HPr protein]-O-phospho-L-serine + ADP + H(+)</text>
        <dbReference type="Rhea" id="RHEA:46600"/>
        <dbReference type="Rhea" id="RHEA-COMP:11602"/>
        <dbReference type="Rhea" id="RHEA-COMP:11603"/>
        <dbReference type="ChEBI" id="CHEBI:15378"/>
        <dbReference type="ChEBI" id="CHEBI:29999"/>
        <dbReference type="ChEBI" id="CHEBI:30616"/>
        <dbReference type="ChEBI" id="CHEBI:83421"/>
        <dbReference type="ChEBI" id="CHEBI:456216"/>
    </reaction>
</comment>
<comment type="catalytic activity">
    <reaction evidence="1">
        <text>[HPr protein]-O-phospho-L-serine + phosphate + H(+) = [HPr protein]-L-serine + diphosphate</text>
        <dbReference type="Rhea" id="RHEA:46604"/>
        <dbReference type="Rhea" id="RHEA-COMP:11602"/>
        <dbReference type="Rhea" id="RHEA-COMP:11603"/>
        <dbReference type="ChEBI" id="CHEBI:15378"/>
        <dbReference type="ChEBI" id="CHEBI:29999"/>
        <dbReference type="ChEBI" id="CHEBI:33019"/>
        <dbReference type="ChEBI" id="CHEBI:43474"/>
        <dbReference type="ChEBI" id="CHEBI:83421"/>
    </reaction>
</comment>
<comment type="cofactor">
    <cofactor evidence="1">
        <name>Mg(2+)</name>
        <dbReference type="ChEBI" id="CHEBI:18420"/>
    </cofactor>
</comment>
<comment type="subunit">
    <text evidence="1">Homohexamer.</text>
</comment>
<comment type="domain">
    <text evidence="1">The Walker A ATP-binding motif also binds Pi and PPi.</text>
</comment>
<comment type="miscellaneous">
    <text evidence="1">Both phosphorylation and phosphorolysis are carried out by the same active site and suggest a common mechanism for both reactions.</text>
</comment>
<comment type="similarity">
    <text evidence="1">Belongs to the HPrK/P family.</text>
</comment>
<name>HPRK_NITEU</name>
<proteinExistence type="inferred from homology"/>
<accession>Q82Y30</accession>
<sequence>MSQVSITQLFEENQEKLNLQWGEPSAVIDRQLENHQINNSTQELIGHLNFVHPNWIQVLNQTSVNYLDQLDDVSLKKRLNQLAKSQLACLIVADDAPIPNAIRQFVNEQSVPLIQSATASLEIIWRLQSYLARMLAPAITRHGVLLDVLGMGVMITGESGVGKSELALELISRGHGLVADDVVELHRIGPETLEGQCPPLLRDFLEVRGLGMLNIRTIFGETAVRRRKNMKLIVHLEKTVGSSINAYERLPLSNLNEIILNVGIRKVIIPVAAGRNLAVLVEAAVRNYILQLRGIDSTQEFIRRHESEMAGNTAEHFDDSHNE</sequence>
<organism>
    <name type="scientific">Nitrosomonas europaea (strain ATCC 19718 / CIP 103999 / KCTC 2705 / NBRC 14298)</name>
    <dbReference type="NCBI Taxonomy" id="228410"/>
    <lineage>
        <taxon>Bacteria</taxon>
        <taxon>Pseudomonadati</taxon>
        <taxon>Pseudomonadota</taxon>
        <taxon>Betaproteobacteria</taxon>
        <taxon>Nitrosomonadales</taxon>
        <taxon>Nitrosomonadaceae</taxon>
        <taxon>Nitrosomonas</taxon>
    </lineage>
</organism>